<gene>
    <name type="primary">flhD</name>
    <name type="synonym">flbB</name>
    <name type="ordered locus">b1892</name>
    <name type="ordered locus">JW1881</name>
</gene>
<comment type="function">
    <text evidence="3 5 7 9">Functions in complex with FlhC as a master transcriptional regulator that regulates transcription of several flagellar and non-flagellar operons by binding to their promoter region. Activates expression of class 2 flagellar genes, including fliA, which is a flagellum-specific sigma factor that turns on the class 3 genes. Also regulates genes whose products function in a variety of physiological pathways.</text>
</comment>
<comment type="subunit">
    <text evidence="6">Homodimer; disulfide-linked. Forms a heterohexamer composed of two FlhC and four FlhD subunits. Each FlhC binds a FlhD dimer, forming a heterotrimer, and a hexamer assembles by dimerization of two heterotrimers.</text>
</comment>
<comment type="subcellular location">
    <subcellularLocation>
        <location>Cytoplasm</location>
    </subcellularLocation>
</comment>
<comment type="induction">
    <text evidence="1 4 8">Expression is regulated by a large number of systems, including induction by quorum sensing via the two-component regulatory system QseB/QseC, induction by cAMP-CRP, repression by high osmolarity via OmpR and repression by H-NS.</text>
</comment>
<comment type="domain">
    <text evidence="2">The C-terminal region contains a putative helix-turn-helix (HTH) motif, suggesting that this region may bind DNA.</text>
</comment>
<comment type="mass spectrometry" mass="13317.0" method="Unknown" evidence="1"/>
<comment type="miscellaneous">
    <text evidence="11">Has been reported to be involved in cell division regulation, but it was later shown that this is not the case.</text>
</comment>
<comment type="similarity">
    <text evidence="10">Belongs to the FlhD family.</text>
</comment>
<comment type="sequence caution" evidence="10">
    <conflict type="erroneous initiation">
        <sequence resource="EMBL-CDS" id="AAA23787"/>
    </conflict>
    <text>Extended N-terminus.</text>
</comment>
<comment type="sequence caution" evidence="10">
    <conflict type="erroneous initiation">
        <sequence resource="EMBL-CDS" id="BAA15713"/>
    </conflict>
    <text>Extended N-terminus.</text>
</comment>
<dbReference type="EMBL" id="M19439">
    <property type="protein sequence ID" value="AAA23787.1"/>
    <property type="status" value="ALT_INIT"/>
    <property type="molecule type" value="Genomic_DNA"/>
</dbReference>
<dbReference type="EMBL" id="U00096">
    <property type="protein sequence ID" value="AAC74962.2"/>
    <property type="molecule type" value="Genomic_DNA"/>
</dbReference>
<dbReference type="EMBL" id="AP009048">
    <property type="protein sequence ID" value="BAA15713.1"/>
    <property type="status" value="ALT_INIT"/>
    <property type="molecule type" value="Genomic_DNA"/>
</dbReference>
<dbReference type="PIR" id="A27735">
    <property type="entry name" value="XMECFB"/>
</dbReference>
<dbReference type="RefSeq" id="NP_416406.4">
    <property type="nucleotide sequence ID" value="NC_000913.3"/>
</dbReference>
<dbReference type="RefSeq" id="WP_001295647.1">
    <property type="nucleotide sequence ID" value="NZ_SSUW01000051.1"/>
</dbReference>
<dbReference type="PDB" id="1G8E">
    <property type="method" value="X-ray"/>
    <property type="resolution" value="1.80 A"/>
    <property type="chains" value="A/B=1-116"/>
</dbReference>
<dbReference type="PDB" id="2AVU">
    <property type="method" value="X-ray"/>
    <property type="resolution" value="3.00 A"/>
    <property type="chains" value="A/B/C/D=1-116"/>
</dbReference>
<dbReference type="PDB" id="4ES4">
    <property type="method" value="X-ray"/>
    <property type="resolution" value="2.90 A"/>
    <property type="chains" value="B/D/F/H=1-116"/>
</dbReference>
<dbReference type="PDBsum" id="1G8E"/>
<dbReference type="PDBsum" id="2AVU"/>
<dbReference type="PDBsum" id="4ES4"/>
<dbReference type="SMR" id="P0A8S9"/>
<dbReference type="BioGRID" id="4262241">
    <property type="interactions" value="93"/>
</dbReference>
<dbReference type="ComplexPortal" id="CPX-2508">
    <property type="entry name" value="FlhDC transcription factor complex"/>
</dbReference>
<dbReference type="DIP" id="DIP-9646N"/>
<dbReference type="FunCoup" id="P0A8S9">
    <property type="interactions" value="257"/>
</dbReference>
<dbReference type="IntAct" id="P0A8S9">
    <property type="interactions" value="15"/>
</dbReference>
<dbReference type="STRING" id="511145.b1892"/>
<dbReference type="PaxDb" id="511145-b1892"/>
<dbReference type="EnsemblBacteria" id="AAC74962">
    <property type="protein sequence ID" value="AAC74962"/>
    <property type="gene ID" value="b1892"/>
</dbReference>
<dbReference type="GeneID" id="93776197"/>
<dbReference type="GeneID" id="945442"/>
<dbReference type="KEGG" id="ecj:JW1881"/>
<dbReference type="KEGG" id="eco:b1892"/>
<dbReference type="KEGG" id="ecoc:C3026_10755"/>
<dbReference type="PATRIC" id="fig|1411691.4.peg.355"/>
<dbReference type="EchoBASE" id="EB0316"/>
<dbReference type="eggNOG" id="ENOG5031P80">
    <property type="taxonomic scope" value="Bacteria"/>
</dbReference>
<dbReference type="HOGENOM" id="CLU_144160_0_0_6"/>
<dbReference type="InParanoid" id="P0A8S9"/>
<dbReference type="OMA" id="REDKPMG"/>
<dbReference type="OrthoDB" id="5298036at2"/>
<dbReference type="PhylomeDB" id="P0A8S9"/>
<dbReference type="BioCyc" id="EcoCyc:EG10320-MONOMER"/>
<dbReference type="EvolutionaryTrace" id="P0A8S9"/>
<dbReference type="PRO" id="PR:P0A8S9"/>
<dbReference type="Proteomes" id="UP000000625">
    <property type="component" value="Chromosome"/>
</dbReference>
<dbReference type="GO" id="GO:0005737">
    <property type="term" value="C:cytoplasm"/>
    <property type="evidence" value="ECO:0007669"/>
    <property type="project" value="UniProtKB-SubCell"/>
</dbReference>
<dbReference type="GO" id="GO:0005667">
    <property type="term" value="C:transcription regulator complex"/>
    <property type="evidence" value="ECO:0000353"/>
    <property type="project" value="ComplexPortal"/>
</dbReference>
<dbReference type="GO" id="GO:0003677">
    <property type="term" value="F:DNA binding"/>
    <property type="evidence" value="ECO:0007669"/>
    <property type="project" value="UniProtKB-UniRule"/>
</dbReference>
<dbReference type="GO" id="GO:0044780">
    <property type="term" value="P:bacterial-type flagellum assembly"/>
    <property type="evidence" value="ECO:0007669"/>
    <property type="project" value="InterPro"/>
</dbReference>
<dbReference type="GO" id="GO:0006351">
    <property type="term" value="P:DNA-templated transcription"/>
    <property type="evidence" value="ECO:0000314"/>
    <property type="project" value="EcoCyc"/>
</dbReference>
<dbReference type="GO" id="GO:1902210">
    <property type="term" value="P:positive regulation of bacterial-type flagellum assembly"/>
    <property type="evidence" value="ECO:0000314"/>
    <property type="project" value="ComplexPortal"/>
</dbReference>
<dbReference type="GO" id="GO:0045893">
    <property type="term" value="P:positive regulation of DNA-templated transcription"/>
    <property type="evidence" value="ECO:0000314"/>
    <property type="project" value="ComplexPortal"/>
</dbReference>
<dbReference type="DisProt" id="DP02700"/>
<dbReference type="FunFam" id="1.10.4000.10:FF:000001">
    <property type="entry name" value="Flagellar transcriptional regulator FlhD"/>
    <property type="match status" value="1"/>
</dbReference>
<dbReference type="Gene3D" id="1.10.4000.10">
    <property type="entry name" value="Flagellar transcriptional activator FlhD"/>
    <property type="match status" value="1"/>
</dbReference>
<dbReference type="HAMAP" id="MF_00725">
    <property type="entry name" value="FlhD"/>
    <property type="match status" value="1"/>
</dbReference>
<dbReference type="InterPro" id="IPR023559">
    <property type="entry name" value="Flagellar_FlhD"/>
</dbReference>
<dbReference type="InterPro" id="IPR036194">
    <property type="entry name" value="FlhD_sf"/>
</dbReference>
<dbReference type="NCBIfam" id="NF002783">
    <property type="entry name" value="PRK02909.1-1"/>
    <property type="match status" value="1"/>
</dbReference>
<dbReference type="Pfam" id="PF05247">
    <property type="entry name" value="FlhD"/>
    <property type="match status" value="1"/>
</dbReference>
<dbReference type="SUPFAM" id="SSF63592">
    <property type="entry name" value="Flagellar transcriptional activator FlhD"/>
    <property type="match status" value="1"/>
</dbReference>
<organism>
    <name type="scientific">Escherichia coli (strain K12)</name>
    <dbReference type="NCBI Taxonomy" id="83333"/>
    <lineage>
        <taxon>Bacteria</taxon>
        <taxon>Pseudomonadati</taxon>
        <taxon>Pseudomonadota</taxon>
        <taxon>Gammaproteobacteria</taxon>
        <taxon>Enterobacterales</taxon>
        <taxon>Enterobacteriaceae</taxon>
        <taxon>Escherichia</taxon>
    </lineage>
</organism>
<proteinExistence type="evidence at protein level"/>
<feature type="chain" id="PRO_0000182713" description="Flagellar transcriptional regulator FlhD">
    <location>
        <begin position="1"/>
        <end position="116"/>
    </location>
</feature>
<feature type="disulfide bond" description="Interchain">
    <location>
        <position position="65"/>
    </location>
</feature>
<feature type="mutagenesis site" description="Partial swarming phenotype." evidence="3">
    <original>H</original>
    <variation>A</variation>
    <location>
        <position position="2"/>
    </location>
</feature>
<feature type="mutagenesis site" description="Partial swarming phenotype. Affects FlhD/FlhC complex formation." evidence="3">
    <original>D</original>
    <variation>A</variation>
    <location>
        <position position="28"/>
    </location>
</feature>
<feature type="mutagenesis site" description="Partial swarming phenotype. Affects FlhD/FlhC complex formation." evidence="3">
    <original>F</original>
    <variation>A</variation>
    <location>
        <position position="34"/>
    </location>
</feature>
<feature type="mutagenesis site" description="Partial swarming phenotype. Affects FlhD/FlhC complex formation." evidence="3">
    <original>R</original>
    <variation>A</variation>
    <location>
        <position position="35"/>
    </location>
</feature>
<feature type="mutagenesis site" description="Partial swarming phenotype. Affects FlhD/FlhC complex formation." evidence="3">
    <original>N</original>
    <variation>A</variation>
    <location>
        <position position="61"/>
    </location>
</feature>
<feature type="mutagenesis site" description="Partial swarming phenotype. Does not affect FlhD/FlhC complex formation, but affects DNA binding." evidence="3">
    <original>S</original>
    <variation>A</variation>
    <location>
        <position position="82"/>
    </location>
</feature>
<feature type="mutagenesis site" description="Partial swarming phenotype. Does not affect FlhD/FlhC complex formation, but affects DNA binding." evidence="3">
    <original>R</original>
    <variation>A</variation>
    <location>
        <position position="83"/>
    </location>
</feature>
<feature type="mutagenesis site" description="Partial swarming phenotype. Does not affect FlhD/FlhC complex formation, but affects DNA binding." evidence="3">
    <original>V</original>
    <variation>A</variation>
    <location>
        <position position="84"/>
    </location>
</feature>
<feature type="mutagenesis site" description="Partial swarming phenotype. Affects FlhD/FlhC complex formation." evidence="3">
    <original>H</original>
    <variation>A</variation>
    <location>
        <position position="91"/>
    </location>
</feature>
<feature type="mutagenesis site" description="Non-swarming phenotype. Affects FlhD/FlhC complex formation." evidence="3">
    <original>T</original>
    <variation>A</variation>
    <location>
        <position position="92"/>
    </location>
</feature>
<feature type="mutagenesis site" description="Non-swarming phenotype. Affects FlhD/FlhC complex formation." evidence="3">
    <original>I</original>
    <variation>A</variation>
    <location>
        <position position="94"/>
    </location>
</feature>
<feature type="mutagenesis site" description="Partial swarming phenotype. Affects FlhD/FlhC complex formation." evidence="3">
    <original>L</original>
    <variation>A</variation>
    <location>
        <position position="96"/>
    </location>
</feature>
<feature type="helix" evidence="12">
    <location>
        <begin position="4"/>
        <end position="27"/>
    </location>
</feature>
<feature type="helix" evidence="12">
    <location>
        <begin position="29"/>
        <end position="36"/>
    </location>
</feature>
<feature type="helix" evidence="12">
    <location>
        <begin position="40"/>
        <end position="47"/>
    </location>
</feature>
<feature type="helix" evidence="12">
    <location>
        <begin position="51"/>
        <end position="58"/>
    </location>
</feature>
<feature type="strand" evidence="12">
    <location>
        <begin position="59"/>
        <end position="62"/>
    </location>
</feature>
<feature type="strand" evidence="12">
    <location>
        <begin position="64"/>
        <end position="68"/>
    </location>
</feature>
<feature type="helix" evidence="12">
    <location>
        <begin position="72"/>
        <end position="78"/>
    </location>
</feature>
<feature type="helix" evidence="12">
    <location>
        <begin position="83"/>
        <end position="91"/>
    </location>
</feature>
<feature type="helix" evidence="12">
    <location>
        <begin position="94"/>
        <end position="97"/>
    </location>
</feature>
<name>FLHD_ECOLI</name>
<sequence length="116" mass="13316">MHTSELLKHIYDINLSYLLLAQRLIVQDKASAMFRLGINEEMATTLAALTLPQMVKLAETNQLVCHFRFDSHQTITQLTQDSRVDDLQQIHTGIMLSTRLLNDVNQPEEALRKKRA</sequence>
<keyword id="KW-0002">3D-structure</keyword>
<keyword id="KW-0010">Activator</keyword>
<keyword id="KW-1005">Bacterial flagellum biogenesis</keyword>
<keyword id="KW-0963">Cytoplasm</keyword>
<keyword id="KW-1015">Disulfide bond</keyword>
<keyword id="KW-0238">DNA-binding</keyword>
<keyword id="KW-1185">Reference proteome</keyword>
<keyword id="KW-0804">Transcription</keyword>
<keyword id="KW-0805">Transcription regulation</keyword>
<evidence type="ECO:0000269" key="1">
    <source>
    </source>
</evidence>
<evidence type="ECO:0000269" key="2">
    <source>
    </source>
</evidence>
<evidence type="ECO:0000269" key="3">
    <source>
    </source>
</evidence>
<evidence type="ECO:0000269" key="4">
    <source>
    </source>
</evidence>
<evidence type="ECO:0000269" key="5">
    <source>
    </source>
</evidence>
<evidence type="ECO:0000269" key="6">
    <source>
    </source>
</evidence>
<evidence type="ECO:0000269" key="7">
    <source>
    </source>
</evidence>
<evidence type="ECO:0000269" key="8">
    <source>
    </source>
</evidence>
<evidence type="ECO:0000269" key="9">
    <source>
    </source>
</evidence>
<evidence type="ECO:0000305" key="10"/>
<evidence type="ECO:0000305" key="11">
    <source>
    </source>
</evidence>
<evidence type="ECO:0007829" key="12">
    <source>
        <dbReference type="PDB" id="1G8E"/>
    </source>
</evidence>
<reference key="1">
    <citation type="journal article" date="1988" name="J. Bacteriol.">
        <title>Flagellar transcriptional activators FlbB and FlaI: gene sequences and 5' consensus sequences of operons under FlbB and FlaI control.</title>
        <authorList>
            <person name="Bartlett D.H."/>
            <person name="Frantz B.B."/>
            <person name="Matsumura P."/>
        </authorList>
    </citation>
    <scope>NUCLEOTIDE SEQUENCE [GENOMIC DNA]</scope>
</reference>
<reference key="2">
    <citation type="journal article" date="1996" name="DNA Res.">
        <title>A 460-kb DNA sequence of the Escherichia coli K-12 genome corresponding to the 40.1-50.0 min region on the linkage map.</title>
        <authorList>
            <person name="Itoh T."/>
            <person name="Aiba H."/>
            <person name="Baba T."/>
            <person name="Fujita K."/>
            <person name="Hayashi K."/>
            <person name="Inada T."/>
            <person name="Isono K."/>
            <person name="Kasai H."/>
            <person name="Kimura S."/>
            <person name="Kitakawa M."/>
            <person name="Kitagawa M."/>
            <person name="Makino K."/>
            <person name="Miki T."/>
            <person name="Mizobuchi K."/>
            <person name="Mori H."/>
            <person name="Mori T."/>
            <person name="Motomura K."/>
            <person name="Nakade S."/>
            <person name="Nakamura Y."/>
            <person name="Nashimoto H."/>
            <person name="Nishio Y."/>
            <person name="Oshima T."/>
            <person name="Saito N."/>
            <person name="Sampei G."/>
            <person name="Seki Y."/>
            <person name="Sivasundaram S."/>
            <person name="Tagami H."/>
            <person name="Takeda J."/>
            <person name="Takemoto K."/>
            <person name="Wada C."/>
            <person name="Yamamoto Y."/>
            <person name="Horiuchi T."/>
        </authorList>
    </citation>
    <scope>NUCLEOTIDE SEQUENCE [LARGE SCALE GENOMIC DNA]</scope>
    <source>
        <strain>K12 / W3110 / ATCC 27325 / DSM 5911</strain>
    </source>
</reference>
<reference key="3">
    <citation type="journal article" date="1997" name="Science">
        <title>The complete genome sequence of Escherichia coli K-12.</title>
        <authorList>
            <person name="Blattner F.R."/>
            <person name="Plunkett G. III"/>
            <person name="Bloch C.A."/>
            <person name="Perna N.T."/>
            <person name="Burland V."/>
            <person name="Riley M."/>
            <person name="Collado-Vides J."/>
            <person name="Glasner J.D."/>
            <person name="Rode C.K."/>
            <person name="Mayhew G.F."/>
            <person name="Gregor J."/>
            <person name="Davis N.W."/>
            <person name="Kirkpatrick H.A."/>
            <person name="Goeden M.A."/>
            <person name="Rose D.J."/>
            <person name="Mau B."/>
            <person name="Shao Y."/>
        </authorList>
    </citation>
    <scope>NUCLEOTIDE SEQUENCE [LARGE SCALE GENOMIC DNA]</scope>
    <source>
        <strain>K12 / MG1655 / ATCC 47076</strain>
    </source>
</reference>
<reference key="4">
    <citation type="journal article" date="2006" name="Mol. Syst. Biol.">
        <title>Highly accurate genome sequences of Escherichia coli K-12 strains MG1655 and W3110.</title>
        <authorList>
            <person name="Hayashi K."/>
            <person name="Morooka N."/>
            <person name="Yamamoto Y."/>
            <person name="Fujita K."/>
            <person name="Isono K."/>
            <person name="Choi S."/>
            <person name="Ohtsubo E."/>
            <person name="Baba T."/>
            <person name="Wanner B.L."/>
            <person name="Mori H."/>
            <person name="Horiuchi T."/>
        </authorList>
    </citation>
    <scope>NUCLEOTIDE SEQUENCE [LARGE SCALE GENOMIC DNA]</scope>
    <source>
        <strain>K12 / W3110 / ATCC 27325 / DSM 5911</strain>
    </source>
</reference>
<reference key="5">
    <citation type="journal article" date="1994" name="J. Bacteriol.">
        <title>The FlhD/FlhC complex, a transcriptional activator of the Escherichia coli flagellar class II operons.</title>
        <authorList>
            <person name="Liu X."/>
            <person name="Matsumura P."/>
        </authorList>
    </citation>
    <scope>FUNCTION</scope>
    <scope>INTERACTION WITH FLHC</scope>
    <scope>DNA-BINDING</scope>
    <source>
        <strain>K12 / MC1000 / ATCC 39531</strain>
    </source>
</reference>
<reference key="6">
    <citation type="journal article" date="1995" name="J. Bacteriol.">
        <title>Modulation of flagellar expression in Escherichia coli by acetyl phosphate and the osmoregulator OmpR.</title>
        <authorList>
            <person name="Shin S."/>
            <person name="Park C."/>
        </authorList>
    </citation>
    <scope>INDUCTION</scope>
    <source>
        <strain>K12</strain>
    </source>
</reference>
<reference key="7">
    <citation type="journal article" date="1999" name="J. Bacteriol.">
        <title>Multiple control of flagellum biosynthesis in Escherichia coli: role of H-NS protein and the cyclic AMP-catabolite activator protein complex in transcription of the flhDC master operon.</title>
        <authorList>
            <person name="Soutourina O."/>
            <person name="Kolb A."/>
            <person name="Krin E."/>
            <person name="Laurent-Winter C."/>
            <person name="Rimsky S."/>
            <person name="Danchin A."/>
            <person name="Bertin P."/>
        </authorList>
    </citation>
    <scope>MASS SPECTROMETRY</scope>
    <scope>INDUCTION</scope>
    <source>
        <strain>K12 / MG1655 / ATCC 47076</strain>
    </source>
</reference>
<reference key="8">
    <citation type="journal article" date="2001" name="Mol. Microbiol.">
        <title>Extensive alanine scanning reveals protein-protein and protein-DNA interaction surfaces in the global regulator FlhD from Escherichia coli.</title>
        <authorList>
            <person name="Campos A."/>
            <person name="Matsumura P."/>
        </authorList>
    </citation>
    <scope>FUNCTION</scope>
    <scope>INTERACTION WITH FLHC</scope>
    <scope>MUTAGENESIS OF HIS-2; ASP-28; PHE-34; ARG-35; ASN-61; SER-82; ARG-83; VAL-84; HIS-91; THR-92; ILE-94 AND LEU-96</scope>
    <source>
        <strain>K12 / YK410</strain>
    </source>
</reference>
<reference key="9">
    <citation type="journal article" date="2002" name="Mol. Microbiol.">
        <title>Quorum sensing Escherichia coli regulators B and C (QseBC): a novel two-component regulatory system involved in the regulation of flagella and motility by quorum sensing in E. coli.</title>
        <authorList>
            <person name="Sperandio V."/>
            <person name="Torres A.G."/>
            <person name="Kaper J.B."/>
        </authorList>
    </citation>
    <scope>INDUCTION</scope>
    <source>
        <strain>K12</strain>
    </source>
</reference>
<reference key="10">
    <citation type="journal article" date="2005" name="Microbiology">
        <title>Binding and transcriptional activation of non-flagellar genes by the Escherichia coli flagellar master regulator FlhD2C2.</title>
        <authorList>
            <person name="Stafford G.P."/>
            <person name="Ogi T."/>
            <person name="Hughes C."/>
        </authorList>
    </citation>
    <scope>FUNCTION</scope>
    <scope>DNA-BINDING</scope>
    <source>
        <strain>K12 / MC1000 / ATCC 39531</strain>
    </source>
</reference>
<reference key="11">
    <citation type="journal article" date="2008" name="Genes Dev.">
        <title>Inverse regulatory coordination of motility and curli-mediated adhesion in Escherichia coli.</title>
        <authorList>
            <person name="Pesavento C."/>
            <person name="Becker G."/>
            <person name="Sommerfeldt N."/>
            <person name="Possling A."/>
            <person name="Tschowri N."/>
            <person name="Mehlis A."/>
            <person name="Hengge R."/>
        </authorList>
    </citation>
    <scope>FUNCTION</scope>
    <source>
        <strain>K12 / MC4100 / ATCC 35695 / DSM 6574</strain>
        <strain>K12 / W3110 / ATCC 27325 / DSM 5911</strain>
    </source>
</reference>
<reference key="12">
    <citation type="journal article" date="2010" name="FEMS Microbiol. Lett.">
        <title>Mutations in the flhD gene of Escherichia coli K-12 do not cause the reported effect on cell division.</title>
        <authorList>
            <person name="Siegele D.A."/>
            <person name="Bain S."/>
            <person name="Mao W."/>
        </authorList>
    </citation>
    <scope>SHOWS THAT IT DOES NOT REGULATE CELL DIVISION</scope>
    <source>
        <strain>K12</strain>
    </source>
</reference>
<reference key="13">
    <citation type="journal article" date="2001" name="Mol. Microbiol.">
        <title>Crystal structure of the global regulator FlhD from Escherichia coli at 1.8 A resolution.</title>
        <authorList>
            <person name="Campos A."/>
            <person name="Zhang R.G."/>
            <person name="Alkire R.W."/>
            <person name="Matsumura P."/>
            <person name="Westbrook E.M."/>
        </authorList>
    </citation>
    <scope>X-RAY CRYSTALLOGRAPHY (1.8 ANGSTROMS) OF 18-116</scope>
    <scope>DOMAIN</scope>
</reference>
<reference key="14">
    <citation type="journal article" date="2006" name="J. Mol. Biol.">
        <title>Structure of the Escherichia coli FlhDC complex, a prokaryotic heteromeric regulator of transcription.</title>
        <authorList>
            <person name="Wang S."/>
            <person name="Fleming R.T."/>
            <person name="Westbrook E.M."/>
            <person name="Matsumura P."/>
            <person name="McKay D.B."/>
        </authorList>
    </citation>
    <scope>X-RAY CRYSTALLOGRAPHY (3.0 ANGSTROMS)</scope>
    <scope>SUBUNIT</scope>
</reference>
<accession>P0A8S9</accession>
<accession>P11164</accession>
<protein>
    <recommendedName>
        <fullName>Flagellar transcriptional regulator FlhD</fullName>
    </recommendedName>
</protein>